<keyword id="KW-0025">Alternative splicing</keyword>
<keyword id="KW-0276">Fatty acid metabolism</keyword>
<keyword id="KW-0436">Ligase</keyword>
<keyword id="KW-0443">Lipid metabolism</keyword>
<keyword id="KW-0576">Peroxisome</keyword>
<keyword id="KW-1185">Reference proteome</keyword>
<gene>
    <name type="primary">AAE18</name>
    <name type="ordered locus">At1g55320</name>
    <name type="ORF">F7A10.14</name>
</gene>
<accession>Q84P17</accession>
<accession>F4I094</accession>
<accession>Q8GZ95</accession>
<accession>Q9C8A3</accession>
<reference key="1">
    <citation type="journal article" date="2003" name="Plant Physiol.">
        <title>Arabidopsis contains a large superfamily of acyl-activating enzymes. Phylogenetic and biochemical analysis reveals a new class of acyl-coenzyme a synthetases.</title>
        <authorList>
            <person name="Shockey J.M."/>
            <person name="Fulda M.S."/>
            <person name="Browse J."/>
        </authorList>
    </citation>
    <scope>NUCLEOTIDE SEQUENCE [MRNA] (ISOFORM 1)</scope>
    <scope>TISSUE SPECIFICITY</scope>
    <scope>GENE FAMILY</scope>
    <scope>NOMENCLATURE</scope>
</reference>
<reference key="2">
    <citation type="journal article" date="2000" name="Nature">
        <title>Sequence and analysis of chromosome 1 of the plant Arabidopsis thaliana.</title>
        <authorList>
            <person name="Theologis A."/>
            <person name="Ecker J.R."/>
            <person name="Palm C.J."/>
            <person name="Federspiel N.A."/>
            <person name="Kaul S."/>
            <person name="White O."/>
            <person name="Alonso J."/>
            <person name="Altafi H."/>
            <person name="Araujo R."/>
            <person name="Bowman C.L."/>
            <person name="Brooks S.Y."/>
            <person name="Buehler E."/>
            <person name="Chan A."/>
            <person name="Chao Q."/>
            <person name="Chen H."/>
            <person name="Cheuk R.F."/>
            <person name="Chin C.W."/>
            <person name="Chung M.K."/>
            <person name="Conn L."/>
            <person name="Conway A.B."/>
            <person name="Conway A.R."/>
            <person name="Creasy T.H."/>
            <person name="Dewar K."/>
            <person name="Dunn P."/>
            <person name="Etgu P."/>
            <person name="Feldblyum T.V."/>
            <person name="Feng J.-D."/>
            <person name="Fong B."/>
            <person name="Fujii C.Y."/>
            <person name="Gill J.E."/>
            <person name="Goldsmith A.D."/>
            <person name="Haas B."/>
            <person name="Hansen N.F."/>
            <person name="Hughes B."/>
            <person name="Huizar L."/>
            <person name="Hunter J.L."/>
            <person name="Jenkins J."/>
            <person name="Johnson-Hopson C."/>
            <person name="Khan S."/>
            <person name="Khaykin E."/>
            <person name="Kim C.J."/>
            <person name="Koo H.L."/>
            <person name="Kremenetskaia I."/>
            <person name="Kurtz D.B."/>
            <person name="Kwan A."/>
            <person name="Lam B."/>
            <person name="Langin-Hooper S."/>
            <person name="Lee A."/>
            <person name="Lee J.M."/>
            <person name="Lenz C.A."/>
            <person name="Li J.H."/>
            <person name="Li Y.-P."/>
            <person name="Lin X."/>
            <person name="Liu S.X."/>
            <person name="Liu Z.A."/>
            <person name="Luros J.S."/>
            <person name="Maiti R."/>
            <person name="Marziali A."/>
            <person name="Militscher J."/>
            <person name="Miranda M."/>
            <person name="Nguyen M."/>
            <person name="Nierman W.C."/>
            <person name="Osborne B.I."/>
            <person name="Pai G."/>
            <person name="Peterson J."/>
            <person name="Pham P.K."/>
            <person name="Rizzo M."/>
            <person name="Rooney T."/>
            <person name="Rowley D."/>
            <person name="Sakano H."/>
            <person name="Salzberg S.L."/>
            <person name="Schwartz J.R."/>
            <person name="Shinn P."/>
            <person name="Southwick A.M."/>
            <person name="Sun H."/>
            <person name="Tallon L.J."/>
            <person name="Tambunga G."/>
            <person name="Toriumi M.J."/>
            <person name="Town C.D."/>
            <person name="Utterback T."/>
            <person name="Van Aken S."/>
            <person name="Vaysberg M."/>
            <person name="Vysotskaia V.S."/>
            <person name="Walker M."/>
            <person name="Wu D."/>
            <person name="Yu G."/>
            <person name="Fraser C.M."/>
            <person name="Venter J.C."/>
            <person name="Davis R.W."/>
        </authorList>
    </citation>
    <scope>NUCLEOTIDE SEQUENCE [LARGE SCALE GENOMIC DNA]</scope>
    <source>
        <strain>cv. Columbia</strain>
    </source>
</reference>
<reference key="3">
    <citation type="journal article" date="2017" name="Plant J.">
        <title>Araport11: a complete reannotation of the Arabidopsis thaliana reference genome.</title>
        <authorList>
            <person name="Cheng C.Y."/>
            <person name="Krishnakumar V."/>
            <person name="Chan A.P."/>
            <person name="Thibaud-Nissen F."/>
            <person name="Schobel S."/>
            <person name="Town C.D."/>
        </authorList>
    </citation>
    <scope>GENOME REANNOTATION</scope>
    <source>
        <strain>cv. Columbia</strain>
    </source>
</reference>
<reference key="4">
    <citation type="submission" date="2002-11" db="EMBL/GenBank/DDBJ databases">
        <title>Large-scale analysis of RIKEN Arabidopsis full-length (RAFL) cDNAs.</title>
        <authorList>
            <person name="Totoki Y."/>
            <person name="Seki M."/>
            <person name="Ishida J."/>
            <person name="Nakajima M."/>
            <person name="Enju A."/>
            <person name="Kamiya A."/>
            <person name="Narusaka M."/>
            <person name="Shin-i T."/>
            <person name="Nakagawa M."/>
            <person name="Sakamoto N."/>
            <person name="Oishi K."/>
            <person name="Kohara Y."/>
            <person name="Kobayashi M."/>
            <person name="Toyoda A."/>
            <person name="Sakaki Y."/>
            <person name="Sakurai T."/>
            <person name="Iida K."/>
            <person name="Akiyama K."/>
            <person name="Satou M."/>
            <person name="Toyoda T."/>
            <person name="Konagaya A."/>
            <person name="Carninci P."/>
            <person name="Kawai J."/>
            <person name="Hayashizaki Y."/>
            <person name="Shinozaki K."/>
        </authorList>
    </citation>
    <scope>NUCLEOTIDE SEQUENCE [LARGE SCALE MRNA] (ISOFORM 2)</scope>
    <source>
        <strain>cv. Columbia</strain>
    </source>
</reference>
<reference key="5">
    <citation type="journal article" date="2009" name="Plant Mol. Biol.">
        <title>Identification of two Arabidopsis genes encoding a peroxisomal oxidoreductase-like protein and an acyl-CoA synthetase-like protein that are required for responses to pro-auxins.</title>
        <authorList>
            <person name="Wiszniewski A.A."/>
            <person name="Zhou W."/>
            <person name="Smith S.M."/>
            <person name="Bussell J.D."/>
        </authorList>
    </citation>
    <scope>FUNCTION</scope>
    <scope>SUBCELLULAR LOCATION</scope>
    <scope>DISRUPTION PHENOTYPE</scope>
</reference>
<protein>
    <recommendedName>
        <fullName>Probable acyl-activating enzyme 18, peroxisomal</fullName>
        <ecNumber>6.2.1.-</ecNumber>
    </recommendedName>
</protein>
<sequence>MWKSIGELSCDDYVKAGLTLEDAKEFDKLVSDVITKAIETDPRDQWKALVDESVLKPWHPHPLHQLLYYSVYSNWDSSVHGPPLYWFPSLSQSKSTNLGKLMEYHGPRLLGPSYKNPLESFELFRRFSVEHPEVYWSFVIDELSLVFHTPPRCILNKSKPEGTWLPDAVLNIAECCLMPSSHPKKEDDSVAVVWRNEGFDDSPVNRMTIKELREQVMLVANAISGSFEKGDTIAIDMPMTVDAVIIYLAIILAGCIVVSIADSFAAKEIATRLKISKAKGIFTQDYILRGGRRFPLYSRVVEAAPSKVIVLPASGTELHVQLREQDVSWMDFLSNAKPHSSGENYYRPIYLPVESVINILFSSGTTGEPKAIPWTQLSPIRSACDGWAHLDVQVGHTYCWPTNLGWVMGPTLMFSCFLTGATLALYSGSPLGRGFGKFVQDAGVTVLGTVPSLVKTWKRTNCMEGLNWTKIKFFATTGEASNVDDVLWLSSKADYKPVIECCGGTELASSYIIGSPLQPQAFGAFSTPSMTTRIIIFDENGVPYPDDQPCTGEVGLFPQHLGATDRLLNANHDEVYFKGMPMYKETRLRRHGDIVKRTVGGYYNVQGRADDTMNLGGIKTSSIEIERVCDQADECISETAAVTLTPPNGGPELLVIFAVLKEGFKQQSGEELKMKFSRTIQKDLNPLFKVSFVKIVPEFPRTASSKLLRRVLRDQIKQELLSLRSRI</sequence>
<dbReference type="EC" id="6.2.1.-"/>
<dbReference type="EMBL" id="AY250845">
    <property type="protein sequence ID" value="AAP03028.1"/>
    <property type="molecule type" value="mRNA"/>
</dbReference>
<dbReference type="EMBL" id="AC027034">
    <property type="protein sequence ID" value="AAG51574.1"/>
    <property type="status" value="ALT_SEQ"/>
    <property type="molecule type" value="Genomic_DNA"/>
</dbReference>
<dbReference type="EMBL" id="CP002684">
    <property type="protein sequence ID" value="AEE33225.1"/>
    <property type="molecule type" value="Genomic_DNA"/>
</dbReference>
<dbReference type="EMBL" id="CP002684">
    <property type="protein sequence ID" value="AEE33226.1"/>
    <property type="molecule type" value="Genomic_DNA"/>
</dbReference>
<dbReference type="EMBL" id="AK117129">
    <property type="protein sequence ID" value="BAC41807.1"/>
    <property type="molecule type" value="mRNA"/>
</dbReference>
<dbReference type="PIR" id="D96595">
    <property type="entry name" value="D96595"/>
</dbReference>
<dbReference type="RefSeq" id="NP_001077723.1">
    <molecule id="Q84P17-2"/>
    <property type="nucleotide sequence ID" value="NM_001084254.1"/>
</dbReference>
<dbReference type="RefSeq" id="NP_175929.3">
    <molecule id="Q84P17-1"/>
    <property type="nucleotide sequence ID" value="NM_104408.5"/>
</dbReference>
<dbReference type="SMR" id="Q84P17"/>
<dbReference type="FunCoup" id="Q84P17">
    <property type="interactions" value="31"/>
</dbReference>
<dbReference type="STRING" id="3702.Q84P17"/>
<dbReference type="GlyGen" id="Q84P17">
    <property type="glycosylation" value="1 site"/>
</dbReference>
<dbReference type="PaxDb" id="3702-AT1G55320.1"/>
<dbReference type="ProteomicsDB" id="244908">
    <molecule id="Q84P17-1"/>
</dbReference>
<dbReference type="EnsemblPlants" id="AT1G55320.1">
    <molecule id="Q84P17-1"/>
    <property type="protein sequence ID" value="AT1G55320.1"/>
    <property type="gene ID" value="AT1G55320"/>
</dbReference>
<dbReference type="EnsemblPlants" id="AT1G55320.2">
    <molecule id="Q84P17-2"/>
    <property type="protein sequence ID" value="AT1G55320.2"/>
    <property type="gene ID" value="AT1G55320"/>
</dbReference>
<dbReference type="GeneID" id="841977"/>
<dbReference type="Gramene" id="AT1G55320.1">
    <molecule id="Q84P17-1"/>
    <property type="protein sequence ID" value="AT1G55320.1"/>
    <property type="gene ID" value="AT1G55320"/>
</dbReference>
<dbReference type="Gramene" id="AT1G55320.2">
    <molecule id="Q84P17-2"/>
    <property type="protein sequence ID" value="AT1G55320.2"/>
    <property type="gene ID" value="AT1G55320"/>
</dbReference>
<dbReference type="KEGG" id="ath:AT1G55320"/>
<dbReference type="Araport" id="AT1G55320"/>
<dbReference type="TAIR" id="AT1G55320">
    <property type="gene designation" value="AAE18"/>
</dbReference>
<dbReference type="eggNOG" id="KOG1175">
    <property type="taxonomic scope" value="Eukaryota"/>
</dbReference>
<dbReference type="InParanoid" id="Q84P17"/>
<dbReference type="OMA" id="MPNTWQT"/>
<dbReference type="OrthoDB" id="10253115at2759"/>
<dbReference type="PhylomeDB" id="Q84P17"/>
<dbReference type="BioCyc" id="ARA:AT1G55320-MONOMER"/>
<dbReference type="PRO" id="PR:Q84P17"/>
<dbReference type="Proteomes" id="UP000006548">
    <property type="component" value="Chromosome 1"/>
</dbReference>
<dbReference type="ExpressionAtlas" id="Q84P17">
    <property type="expression patterns" value="baseline and differential"/>
</dbReference>
<dbReference type="GO" id="GO:0005777">
    <property type="term" value="C:peroxisome"/>
    <property type="evidence" value="ECO:0000314"/>
    <property type="project" value="TAIR"/>
</dbReference>
<dbReference type="GO" id="GO:0016874">
    <property type="term" value="F:ligase activity"/>
    <property type="evidence" value="ECO:0007669"/>
    <property type="project" value="UniProtKB-KW"/>
</dbReference>
<dbReference type="GO" id="GO:0009850">
    <property type="term" value="P:auxin metabolic process"/>
    <property type="evidence" value="ECO:0000315"/>
    <property type="project" value="TAIR"/>
</dbReference>
<dbReference type="GO" id="GO:0006631">
    <property type="term" value="P:fatty acid metabolic process"/>
    <property type="evidence" value="ECO:0007669"/>
    <property type="project" value="UniProtKB-KW"/>
</dbReference>
<dbReference type="FunFam" id="3.40.50.12780:FF:000093">
    <property type="entry name" value="Probable acyl-activating enzyme 18, peroxisomal"/>
    <property type="match status" value="1"/>
</dbReference>
<dbReference type="Gene3D" id="3.30.300.30">
    <property type="match status" value="1"/>
</dbReference>
<dbReference type="Gene3D" id="3.40.50.12780">
    <property type="entry name" value="N-terminal domain of ligase-like"/>
    <property type="match status" value="1"/>
</dbReference>
<dbReference type="InterPro" id="IPR032387">
    <property type="entry name" value="ACAS_N"/>
</dbReference>
<dbReference type="InterPro" id="IPR045851">
    <property type="entry name" value="AMP-bd_C_sf"/>
</dbReference>
<dbReference type="InterPro" id="IPR020845">
    <property type="entry name" value="AMP-binding_CS"/>
</dbReference>
<dbReference type="InterPro" id="IPR000873">
    <property type="entry name" value="AMP-dep_synth/lig_dom"/>
</dbReference>
<dbReference type="InterPro" id="IPR042099">
    <property type="entry name" value="ANL_N_sf"/>
</dbReference>
<dbReference type="PANTHER" id="PTHR44378">
    <property type="entry name" value="ACYL-ACTIVATING ENZYME 17, PEROXISOMAL-RELATED"/>
    <property type="match status" value="1"/>
</dbReference>
<dbReference type="PANTHER" id="PTHR44378:SF1">
    <property type="entry name" value="ACYL-ACTIVATING ENZYME 18, PEROXISOMAL-RELATED"/>
    <property type="match status" value="1"/>
</dbReference>
<dbReference type="Pfam" id="PF16177">
    <property type="entry name" value="ACAS_N"/>
    <property type="match status" value="1"/>
</dbReference>
<dbReference type="Pfam" id="PF00501">
    <property type="entry name" value="AMP-binding"/>
    <property type="match status" value="1"/>
</dbReference>
<dbReference type="SUPFAM" id="SSF56801">
    <property type="entry name" value="Acetyl-CoA synthetase-like"/>
    <property type="match status" value="1"/>
</dbReference>
<dbReference type="PROSITE" id="PS00455">
    <property type="entry name" value="AMP_BINDING"/>
    <property type="match status" value="1"/>
</dbReference>
<feature type="chain" id="PRO_0000415728" description="Probable acyl-activating enzyme 18, peroxisomal">
    <location>
        <begin position="1"/>
        <end position="727"/>
    </location>
</feature>
<feature type="short sequence motif" description="Microbody targeting signal" evidence="1">
    <location>
        <begin position="725"/>
        <end position="727"/>
    </location>
</feature>
<feature type="splice variant" id="VSP_042325" description="In isoform 2." evidence="4">
    <location>
        <begin position="1"/>
        <end position="216"/>
    </location>
</feature>
<feature type="sequence conflict" description="In Ref. 4; BAC41807." evidence="5" ref="4">
    <original>S</original>
    <variation>G</variation>
    <location>
        <position position="298"/>
    </location>
</feature>
<organism>
    <name type="scientific">Arabidopsis thaliana</name>
    <name type="common">Mouse-ear cress</name>
    <dbReference type="NCBI Taxonomy" id="3702"/>
    <lineage>
        <taxon>Eukaryota</taxon>
        <taxon>Viridiplantae</taxon>
        <taxon>Streptophyta</taxon>
        <taxon>Embryophyta</taxon>
        <taxon>Tracheophyta</taxon>
        <taxon>Spermatophyta</taxon>
        <taxon>Magnoliopsida</taxon>
        <taxon>eudicotyledons</taxon>
        <taxon>Gunneridae</taxon>
        <taxon>Pentapetalae</taxon>
        <taxon>rosids</taxon>
        <taxon>malvids</taxon>
        <taxon>Brassicales</taxon>
        <taxon>Brassicaceae</taxon>
        <taxon>Camelineae</taxon>
        <taxon>Arabidopsis</taxon>
    </lineage>
</organism>
<evidence type="ECO:0000255" key="1"/>
<evidence type="ECO:0000269" key="2">
    <source>
    </source>
</evidence>
<evidence type="ECO:0000269" key="3">
    <source>
    </source>
</evidence>
<evidence type="ECO:0000303" key="4">
    <source ref="4"/>
</evidence>
<evidence type="ECO:0000305" key="5"/>
<name>AEE18_ARATH</name>
<proteinExistence type="evidence at transcript level"/>
<comment type="function">
    <text evidence="3">May be involved in the peroxisomal activation of 2,4-dichlorophenoxybutyric acid (2,4-DB), a precursor of active auxins that inhibit root growth.</text>
</comment>
<comment type="subcellular location">
    <subcellularLocation>
        <location evidence="3">Peroxisome</location>
    </subcellularLocation>
</comment>
<comment type="alternative products">
    <event type="alternative splicing"/>
    <isoform>
        <id>Q84P17-1</id>
        <name>1</name>
        <sequence type="displayed"/>
    </isoform>
    <isoform>
        <id>Q84P17-2</id>
        <name>2</name>
        <sequence type="described" ref="VSP_042325"/>
    </isoform>
</comment>
<comment type="tissue specificity">
    <text evidence="2">Expressed in flowers.</text>
</comment>
<comment type="disruption phenotype">
    <text evidence="3">No visible phenotype under normal growth conditions, but plants are resistant to 2,4-DB.</text>
</comment>
<comment type="similarity">
    <text evidence="5">Belongs to the ATP-dependent AMP-binding enzyme family.</text>
</comment>
<comment type="sequence caution" evidence="5">
    <conflict type="erroneous gene model prediction">
        <sequence resource="EMBL-CDS" id="AAG51574"/>
    </conflict>
    <text>The predicted gene At1g55325 has been split into 2 genes: At1g55320 and At1g55325.</text>
</comment>